<reference key="1">
    <citation type="submission" date="2004-11" db="EMBL/GenBank/DDBJ databases">
        <authorList>
            <consortium name="The German cDNA consortium"/>
        </authorList>
    </citation>
    <scope>NUCLEOTIDE SEQUENCE [LARGE SCALE MRNA]</scope>
    <source>
        <tissue>Brain cortex</tissue>
    </source>
</reference>
<dbReference type="EC" id="3.6.1.52" evidence="5"/>
<dbReference type="EC" id="3.6.1.61" evidence="5"/>
<dbReference type="EMBL" id="CR859067">
    <property type="protein sequence ID" value="CAH91260.1"/>
    <property type="molecule type" value="mRNA"/>
</dbReference>
<dbReference type="RefSeq" id="NP_001125746.1">
    <property type="nucleotide sequence ID" value="NM_001132274.1"/>
</dbReference>
<dbReference type="SMR" id="Q5RAF0"/>
<dbReference type="FunCoup" id="Q5RAF0">
    <property type="interactions" value="2153"/>
</dbReference>
<dbReference type="STRING" id="9601.ENSPPYP00000005509"/>
<dbReference type="GeneID" id="100172671"/>
<dbReference type="KEGG" id="pon:100172671"/>
<dbReference type="CTD" id="11163"/>
<dbReference type="eggNOG" id="KOG2839">
    <property type="taxonomic scope" value="Eukaryota"/>
</dbReference>
<dbReference type="HOGENOM" id="CLU_037162_1_0_1"/>
<dbReference type="InParanoid" id="Q5RAF0"/>
<dbReference type="OrthoDB" id="2011998at2759"/>
<dbReference type="TreeFam" id="TF106349"/>
<dbReference type="Proteomes" id="UP000001595">
    <property type="component" value="Chromosome 12"/>
</dbReference>
<dbReference type="GO" id="GO:0005737">
    <property type="term" value="C:cytoplasm"/>
    <property type="evidence" value="ECO:0007669"/>
    <property type="project" value="UniProtKB-SubCell"/>
</dbReference>
<dbReference type="GO" id="GO:0005634">
    <property type="term" value="C:nucleus"/>
    <property type="evidence" value="ECO:0007669"/>
    <property type="project" value="TreeGrafter"/>
</dbReference>
<dbReference type="GO" id="GO:0034431">
    <property type="term" value="F:bis(5'-adenosyl)-hexaphosphatase activity"/>
    <property type="evidence" value="ECO:0007669"/>
    <property type="project" value="TreeGrafter"/>
</dbReference>
<dbReference type="GO" id="GO:0034432">
    <property type="term" value="F:bis(5'-adenosyl)-pentaphosphatase activity"/>
    <property type="evidence" value="ECO:0007669"/>
    <property type="project" value="TreeGrafter"/>
</dbReference>
<dbReference type="GO" id="GO:0000298">
    <property type="term" value="F:endopolyphosphatase activity"/>
    <property type="evidence" value="ECO:0007669"/>
    <property type="project" value="TreeGrafter"/>
</dbReference>
<dbReference type="GO" id="GO:0052848">
    <property type="term" value="F:inositol-3,5-bisdiphosphate-2,3,4,6-tetrakisphosphate 5-diphosphatase activity"/>
    <property type="evidence" value="ECO:0007669"/>
    <property type="project" value="RHEA"/>
</dbReference>
<dbReference type="GO" id="GO:0052845">
    <property type="term" value="F:inositol-5-diphosphate-1,2,3,4,6-pentakisphosphate diphosphatase activity"/>
    <property type="evidence" value="ECO:0007669"/>
    <property type="project" value="RHEA"/>
</dbReference>
<dbReference type="GO" id="GO:0106211">
    <property type="term" value="F:inositol-5-diphosphate-1,3,4,6-tetrakisphosphate diphosphatase activity"/>
    <property type="evidence" value="ECO:0007669"/>
    <property type="project" value="RHEA"/>
</dbReference>
<dbReference type="GO" id="GO:0046872">
    <property type="term" value="F:metal ion binding"/>
    <property type="evidence" value="ECO:0007669"/>
    <property type="project" value="UniProtKB-KW"/>
</dbReference>
<dbReference type="GO" id="GO:0030515">
    <property type="term" value="F:snoRNA binding"/>
    <property type="evidence" value="ECO:0000250"/>
    <property type="project" value="UniProtKB"/>
</dbReference>
<dbReference type="GO" id="GO:1901911">
    <property type="term" value="P:adenosine 5'-(hexahydrogen pentaphosphate) catabolic process"/>
    <property type="evidence" value="ECO:0007669"/>
    <property type="project" value="TreeGrafter"/>
</dbReference>
<dbReference type="GO" id="GO:1901909">
    <property type="term" value="P:diadenosine hexaphosphate catabolic process"/>
    <property type="evidence" value="ECO:0007669"/>
    <property type="project" value="TreeGrafter"/>
</dbReference>
<dbReference type="GO" id="GO:1901907">
    <property type="term" value="P:diadenosine pentaphosphate catabolic process"/>
    <property type="evidence" value="ECO:0007669"/>
    <property type="project" value="TreeGrafter"/>
</dbReference>
<dbReference type="GO" id="GO:0071543">
    <property type="term" value="P:diphosphoinositol polyphosphate metabolic process"/>
    <property type="evidence" value="ECO:0007669"/>
    <property type="project" value="TreeGrafter"/>
</dbReference>
<dbReference type="CDD" id="cd04666">
    <property type="entry name" value="NUDIX_DIPP2_like_Nudt4"/>
    <property type="match status" value="1"/>
</dbReference>
<dbReference type="FunFam" id="3.90.79.10:FF:000002">
    <property type="entry name" value="diphosphoinositol polyphosphate phosphohydrolase 1"/>
    <property type="match status" value="1"/>
</dbReference>
<dbReference type="Gene3D" id="3.90.79.10">
    <property type="entry name" value="Nucleoside Triphosphate Pyrophosphohydrolase"/>
    <property type="match status" value="1"/>
</dbReference>
<dbReference type="InterPro" id="IPR047198">
    <property type="entry name" value="DDP-like_NUDIX"/>
</dbReference>
<dbReference type="InterPro" id="IPR015797">
    <property type="entry name" value="NUDIX_hydrolase-like_dom_sf"/>
</dbReference>
<dbReference type="InterPro" id="IPR020084">
    <property type="entry name" value="NUDIX_hydrolase_CS"/>
</dbReference>
<dbReference type="InterPro" id="IPR000086">
    <property type="entry name" value="NUDIX_hydrolase_dom"/>
</dbReference>
<dbReference type="PANTHER" id="PTHR12629">
    <property type="entry name" value="DIPHOSPHOINOSITOL POLYPHOSPHATE PHOSPHOHYDROLASE"/>
    <property type="match status" value="1"/>
</dbReference>
<dbReference type="PANTHER" id="PTHR12629:SF6">
    <property type="entry name" value="DIPHOSPHOINOSITOL POLYPHOSPHATE PHOSPHOHYDROLASE 2-RELATED"/>
    <property type="match status" value="1"/>
</dbReference>
<dbReference type="Pfam" id="PF00293">
    <property type="entry name" value="NUDIX"/>
    <property type="match status" value="1"/>
</dbReference>
<dbReference type="SUPFAM" id="SSF55811">
    <property type="entry name" value="Nudix"/>
    <property type="match status" value="1"/>
</dbReference>
<dbReference type="PROSITE" id="PS51462">
    <property type="entry name" value="NUDIX"/>
    <property type="match status" value="1"/>
</dbReference>
<dbReference type="PROSITE" id="PS00893">
    <property type="entry name" value="NUDIX_BOX"/>
    <property type="match status" value="1"/>
</dbReference>
<sequence length="180" mass="20306">MMKFKPNQTRTYDREGFKKRAACLCFRSEQEDEVLLVSSSRYPDQWIVPGGGMEPEEEPGGAAVREVYEEAGVKGKLGRLLGIFENQDRKHRTYVYVLTVTEILEDWEDSVNIGRKREWFKVEDAIKVLQCHKPVHAEYLEKLKLGCSPANGNSTVPSLPDNNALFVTAAQTSGLPSSVR</sequence>
<feature type="chain" id="PRO_0000057060" description="Diphosphoinositol polyphosphate phosphohydrolase 2">
    <location>
        <begin position="1"/>
        <end position="180"/>
    </location>
</feature>
<feature type="domain" description="Nudix hydrolase" evidence="6">
    <location>
        <begin position="18"/>
        <end position="144"/>
    </location>
</feature>
<feature type="short sequence motif" description="Nudix box">
    <location>
        <begin position="51"/>
        <end position="72"/>
    </location>
</feature>
<feature type="active site" description="Proton acceptor" evidence="1">
    <location>
        <position position="69"/>
    </location>
</feature>
<feature type="binding site" evidence="2">
    <location>
        <position position="10"/>
    </location>
    <ligand>
        <name>substrate</name>
    </ligand>
</feature>
<feature type="binding site" evidence="2">
    <location>
        <begin position="18"/>
        <end position="20"/>
    </location>
    <ligand>
        <name>substrate</name>
    </ligand>
</feature>
<feature type="binding site" evidence="2">
    <location>
        <begin position="39"/>
        <end position="41"/>
    </location>
    <ligand>
        <name>substrate</name>
    </ligand>
</feature>
<feature type="binding site" evidence="2">
    <location>
        <position position="50"/>
    </location>
    <ligand>
        <name>Mg(2+)</name>
        <dbReference type="ChEBI" id="CHEBI:18420"/>
        <label>1</label>
    </ligand>
</feature>
<feature type="binding site" evidence="2">
    <location>
        <position position="66"/>
    </location>
    <ligand>
        <name>Mg(2+)</name>
        <dbReference type="ChEBI" id="CHEBI:18420"/>
        <label>2</label>
    </ligand>
</feature>
<feature type="binding site" evidence="2">
    <location>
        <position position="66"/>
    </location>
    <ligand>
        <name>Mg(2+)</name>
        <dbReference type="ChEBI" id="CHEBI:18420"/>
        <label>3</label>
    </ligand>
</feature>
<feature type="binding site" evidence="2">
    <location>
        <position position="70"/>
    </location>
    <ligand>
        <name>Mg(2+)</name>
        <dbReference type="ChEBI" id="CHEBI:18420"/>
        <label>1</label>
    </ligand>
</feature>
<feature type="binding site" evidence="2">
    <location>
        <begin position="89"/>
        <end position="91"/>
    </location>
    <ligand>
        <name>substrate</name>
    </ligand>
</feature>
<feature type="binding site" evidence="2">
    <location>
        <position position="115"/>
    </location>
    <ligand>
        <name>substrate</name>
    </ligand>
</feature>
<feature type="binding site" evidence="2">
    <location>
        <position position="133"/>
    </location>
    <ligand>
        <name>substrate</name>
    </ligand>
</feature>
<feature type="modified residue" description="N-acetylmethionine" evidence="5">
    <location>
        <position position="1"/>
    </location>
</feature>
<protein>
    <recommendedName>
        <fullName evidence="5">Diphosphoinositol polyphosphate phosphohydrolase 2</fullName>
        <shortName evidence="5">DIPP-2</shortName>
        <ecNumber evidence="5">3.6.1.52</ecNumber>
    </recommendedName>
    <alternativeName>
        <fullName>Diadenosine 5',5'''-P1,P6-hexaphosphate hydrolase 2</fullName>
        <ecNumber evidence="5">3.6.1.61</ecNumber>
    </alternativeName>
    <alternativeName>
        <fullName>Nucleoside diphosphate-linked moiety X motif 4</fullName>
        <shortName>Nudix motif 4</shortName>
    </alternativeName>
</protein>
<keyword id="KW-0007">Acetylation</keyword>
<keyword id="KW-0963">Cytoplasm</keyword>
<keyword id="KW-0378">Hydrolase</keyword>
<keyword id="KW-0460">Magnesium</keyword>
<keyword id="KW-0464">Manganese</keyword>
<keyword id="KW-0479">Metal-binding</keyword>
<keyword id="KW-1185">Reference proteome</keyword>
<keyword id="KW-0694">RNA-binding</keyword>
<evidence type="ECO:0000250" key="1"/>
<evidence type="ECO:0000250" key="2">
    <source>
        <dbReference type="UniProtKB" id="O95989"/>
    </source>
</evidence>
<evidence type="ECO:0000250" key="3">
    <source>
        <dbReference type="UniProtKB" id="Q8R2U6"/>
    </source>
</evidence>
<evidence type="ECO:0000250" key="4">
    <source>
        <dbReference type="UniProtKB" id="Q96G61"/>
    </source>
</evidence>
<evidence type="ECO:0000250" key="5">
    <source>
        <dbReference type="UniProtKB" id="Q9NZJ9"/>
    </source>
</evidence>
<evidence type="ECO:0000255" key="6">
    <source>
        <dbReference type="PROSITE-ProRule" id="PRU00794"/>
    </source>
</evidence>
<evidence type="ECO:0000305" key="7"/>
<name>NUDT4_PONAB</name>
<comment type="function">
    <text evidence="3 5">Cleaves the beta-phosphate from diphosphoinositol polyphosphates such as PP-InsP5 (diphosphoinositol pentakisphosphate), PP-InsP4 (diphosphoinositol tetrakisphosphate) and [PP]2-InsP4 (bisdiphosphoinositol tetrakisphosphate), suggesting that it may play a role in signal transduction. Diadenosine polyphosphates, particularly Ap6A (P(1),P(6)-bis(5a-adenosyl) hexaphosphate) and Ap5A (P(1),P(5)-bis(5'-adenosyl) pentaphosphate) are downstream effectors of a signaling cascade that regulates cardiac KATP channels, can also be substrates, although with lower preference than the diphosphoinositol polyphosphates. Can also catalyze the hydrolysis of 5-phosphoribose 1-diphosphate, generating the glycolytic activator ribose 1,5-bisphosphate (By similarity). Does not play a role in U8 snoRNA decapping activity (By similarity). Binds U8 snoRNA (By similarity).</text>
</comment>
<comment type="catalytic activity">
    <reaction evidence="5">
        <text>diphospho-myo-inositol polyphosphate + H2O = myo-inositol polyphosphate + phosphate.</text>
        <dbReference type="EC" id="3.6.1.52"/>
    </reaction>
</comment>
<comment type="catalytic activity">
    <reaction evidence="5">
        <text>5-diphospho-1D-myo-inositol 1,2,3,4,6-pentakisphosphate + H2O = 1D-myo-inositol hexakisphosphate + phosphate + H(+)</text>
        <dbReference type="Rhea" id="RHEA:22384"/>
        <dbReference type="ChEBI" id="CHEBI:15377"/>
        <dbReference type="ChEBI" id="CHEBI:15378"/>
        <dbReference type="ChEBI" id="CHEBI:43474"/>
        <dbReference type="ChEBI" id="CHEBI:58130"/>
        <dbReference type="ChEBI" id="CHEBI:58628"/>
        <dbReference type="EC" id="3.6.1.52"/>
    </reaction>
    <physiologicalReaction direction="left-to-right" evidence="5">
        <dbReference type="Rhea" id="RHEA:22385"/>
    </physiologicalReaction>
</comment>
<comment type="catalytic activity">
    <reaction evidence="5">
        <text>3,5-bis(diphospho)-1D-myo-inositol 1,2,4,6-tetrakisphosphate + H2O = 3-diphospho-1D-myo-inositol 1,2,4,5,6-pentakisphosphate + phosphate + 2 H(+)</text>
        <dbReference type="Rhea" id="RHEA:56312"/>
        <dbReference type="ChEBI" id="CHEBI:15377"/>
        <dbReference type="ChEBI" id="CHEBI:15378"/>
        <dbReference type="ChEBI" id="CHEBI:43474"/>
        <dbReference type="ChEBI" id="CHEBI:140372"/>
        <dbReference type="ChEBI" id="CHEBI:140374"/>
        <dbReference type="EC" id="3.6.1.52"/>
    </reaction>
    <physiologicalReaction direction="left-to-right" evidence="5">
        <dbReference type="Rhea" id="RHEA:56313"/>
    </physiologicalReaction>
</comment>
<comment type="catalytic activity">
    <reaction evidence="5">
        <text>5-diphospho-1D-myo-inositol 1,3,4,6-tetrakisphosphate + H2O = 1D-myo-inositol 1,3,4,5,6-pentakisphosphate + phosphate + H(+)</text>
        <dbReference type="Rhea" id="RHEA:59500"/>
        <dbReference type="ChEBI" id="CHEBI:15377"/>
        <dbReference type="ChEBI" id="CHEBI:15378"/>
        <dbReference type="ChEBI" id="CHEBI:43474"/>
        <dbReference type="ChEBI" id="CHEBI:57733"/>
        <dbReference type="ChEBI" id="CHEBI:142939"/>
        <dbReference type="EC" id="3.6.1.52"/>
    </reaction>
    <physiologicalReaction direction="left-to-right" evidence="5">
        <dbReference type="Rhea" id="RHEA:59501"/>
    </physiologicalReaction>
</comment>
<comment type="catalytic activity">
    <reaction evidence="5">
        <text>P(1),P(6)-bis(5'-adenosyl) hexaphosphate + H2O = 2 ATP + 2 H(+)</text>
        <dbReference type="Rhea" id="RHEA:32043"/>
        <dbReference type="ChEBI" id="CHEBI:15377"/>
        <dbReference type="ChEBI" id="CHEBI:15378"/>
        <dbReference type="ChEBI" id="CHEBI:30616"/>
        <dbReference type="ChEBI" id="CHEBI:63740"/>
        <dbReference type="EC" id="3.6.1.61"/>
    </reaction>
    <physiologicalReaction direction="left-to-right" evidence="5">
        <dbReference type="Rhea" id="RHEA:32044"/>
    </physiologicalReaction>
</comment>
<comment type="catalytic activity">
    <reaction evidence="5">
        <text>P(1),P(5)-bis(5'-adenosyl) pentaphosphate + H2O = ADP + ATP + 2 H(+)</text>
        <dbReference type="Rhea" id="RHEA:30527"/>
        <dbReference type="ChEBI" id="CHEBI:15377"/>
        <dbReference type="ChEBI" id="CHEBI:15378"/>
        <dbReference type="ChEBI" id="CHEBI:30616"/>
        <dbReference type="ChEBI" id="CHEBI:62041"/>
        <dbReference type="ChEBI" id="CHEBI:456216"/>
        <dbReference type="EC" id="3.6.1.61"/>
    </reaction>
    <physiologicalReaction direction="left-to-right" evidence="5">
        <dbReference type="Rhea" id="RHEA:30528"/>
    </physiologicalReaction>
</comment>
<comment type="catalytic activity">
    <reaction evidence="5">
        <text>5-phospho-alpha-D-ribose 1-diphosphate + H2O = alpha-D-ribose 1,5-bisphosphate + phosphate + H(+)</text>
        <dbReference type="Rhea" id="RHEA:80811"/>
        <dbReference type="ChEBI" id="CHEBI:15377"/>
        <dbReference type="ChEBI" id="CHEBI:15378"/>
        <dbReference type="ChEBI" id="CHEBI:43474"/>
        <dbReference type="ChEBI" id="CHEBI:58017"/>
        <dbReference type="ChEBI" id="CHEBI:68688"/>
    </reaction>
    <physiologicalReaction direction="left-to-right" evidence="5">
        <dbReference type="Rhea" id="RHEA:80812"/>
    </physiologicalReaction>
</comment>
<comment type="cofactor">
    <cofactor evidence="4">
        <name>Mg(2+)</name>
        <dbReference type="ChEBI" id="CHEBI:18420"/>
    </cofactor>
    <cofactor evidence="4">
        <name>Mn(2+)</name>
        <dbReference type="ChEBI" id="CHEBI:29035"/>
    </cofactor>
    <text evidence="1 4">Binds 3 Mg(2+) or Mn(2+) ions per subunit.</text>
</comment>
<comment type="subcellular location">
    <subcellularLocation>
        <location evidence="5">Cytoplasm</location>
    </subcellularLocation>
</comment>
<comment type="similarity">
    <text evidence="7">Belongs to the Nudix hydrolase family. DIPP subfamily.</text>
</comment>
<proteinExistence type="evidence at transcript level"/>
<accession>Q5RAF0</accession>
<gene>
    <name evidence="5" type="primary">NUDT4</name>
    <name type="synonym">DIPP2</name>
</gene>
<organism>
    <name type="scientific">Pongo abelii</name>
    <name type="common">Sumatran orangutan</name>
    <name type="synonym">Pongo pygmaeus abelii</name>
    <dbReference type="NCBI Taxonomy" id="9601"/>
    <lineage>
        <taxon>Eukaryota</taxon>
        <taxon>Metazoa</taxon>
        <taxon>Chordata</taxon>
        <taxon>Craniata</taxon>
        <taxon>Vertebrata</taxon>
        <taxon>Euteleostomi</taxon>
        <taxon>Mammalia</taxon>
        <taxon>Eutheria</taxon>
        <taxon>Euarchontoglires</taxon>
        <taxon>Primates</taxon>
        <taxon>Haplorrhini</taxon>
        <taxon>Catarrhini</taxon>
        <taxon>Hominidae</taxon>
        <taxon>Pongo</taxon>
    </lineage>
</organism>